<keyword id="KW-0414">Isoprene biosynthesis</keyword>
<keyword id="KW-0456">Lyase</keyword>
<keyword id="KW-0479">Metal-binding</keyword>
<keyword id="KW-0511">Multifunctional enzyme</keyword>
<keyword id="KW-0548">Nucleotidyltransferase</keyword>
<keyword id="KW-1185">Reference proteome</keyword>
<keyword id="KW-0808">Transferase</keyword>
<protein>
    <recommendedName>
        <fullName evidence="1">Bifunctional enzyme IspD/IspF</fullName>
    </recommendedName>
    <domain>
        <recommendedName>
            <fullName evidence="1">2-C-methyl-D-erythritol 4-phosphate cytidylyltransferase</fullName>
            <ecNumber evidence="1">2.7.7.60</ecNumber>
        </recommendedName>
        <alternativeName>
            <fullName evidence="1">4-diphosphocytidyl-2C-methyl-D-erythritol synthase</fullName>
        </alternativeName>
        <alternativeName>
            <fullName evidence="1">MEP cytidylyltransferase</fullName>
            <shortName evidence="1">MCT</shortName>
        </alternativeName>
    </domain>
    <domain>
        <recommendedName>
            <fullName evidence="1">2-C-methyl-D-erythritol 2,4-cyclodiphosphate synthase</fullName>
            <shortName evidence="1">MECDP-synthase</shortName>
            <shortName evidence="1">MECPP-synthase</shortName>
            <shortName evidence="1">MECPS</shortName>
            <ecNumber evidence="1">4.6.1.12</ecNumber>
        </recommendedName>
    </domain>
</protein>
<accession>A5V2U9</accession>
<sequence length="382" mass="39112">MTGKPSIAALIVAAGQGVRSGGGVPKQYRRIGGKAVLAHAVDALARHPAIGSVQVVIGAGQEDLHAEAVGGRTLPPPVTGGATRRDSVIAGLAAVDADIVLIHDAARPFLPAAVIDRLIAALDGSDGAVPALAVADTLAKGDALLGDAVPRDGLHRVQTPQAFRRADILAAHRAWDPAREATDDAQVARAHGLSVAIVEGDRSLEKLTFAADFEAAEERMAMISRTAMGFDVHGFTAGDGVQLGGVRIAHDRALAGHSDADVALHALTDALLGTIAAGDIGSHFPPSDQRWKGADSAMFLAHARDLVAAAGGIVDFVDLTIICEAPKVGPHRAAIRDRIAALLGLTAGQVSVKATTTERLGFTGRREGIAAQAVATVRVPSI</sequence>
<feature type="chain" id="PRO_0000315556" description="Bifunctional enzyme IspD/IspF">
    <location>
        <begin position="1"/>
        <end position="382"/>
    </location>
</feature>
<feature type="region of interest" description="2-C-methyl-D-erythritol 4-phosphate cytidylyltransferase" evidence="1">
    <location>
        <begin position="1"/>
        <end position="225"/>
    </location>
</feature>
<feature type="region of interest" description="2-C-methyl-D-erythritol 2,4-cyclodiphosphate synthase" evidence="1">
    <location>
        <begin position="225"/>
        <end position="382"/>
    </location>
</feature>
<feature type="binding site" evidence="1">
    <location>
        <begin position="231"/>
        <end position="233"/>
    </location>
    <ligand>
        <name>4-CDP-2-C-methyl-D-erythritol 2-phosphate</name>
        <dbReference type="ChEBI" id="CHEBI:57919"/>
    </ligand>
</feature>
<feature type="binding site" evidence="1">
    <location>
        <position position="231"/>
    </location>
    <ligand>
        <name>a divalent metal cation</name>
        <dbReference type="ChEBI" id="CHEBI:60240"/>
    </ligand>
</feature>
<feature type="binding site" evidence="1">
    <location>
        <position position="233"/>
    </location>
    <ligand>
        <name>a divalent metal cation</name>
        <dbReference type="ChEBI" id="CHEBI:60240"/>
    </ligand>
</feature>
<feature type="binding site" evidence="1">
    <location>
        <begin position="257"/>
        <end position="258"/>
    </location>
    <ligand>
        <name>4-CDP-2-C-methyl-D-erythritol 2-phosphate</name>
        <dbReference type="ChEBI" id="CHEBI:57919"/>
    </ligand>
</feature>
<feature type="binding site" evidence="1">
    <location>
        <position position="265"/>
    </location>
    <ligand>
        <name>a divalent metal cation</name>
        <dbReference type="ChEBI" id="CHEBI:60240"/>
    </ligand>
</feature>
<feature type="binding site" evidence="1">
    <location>
        <begin position="279"/>
        <end position="281"/>
    </location>
    <ligand>
        <name>4-CDP-2-C-methyl-D-erythritol 2-phosphate</name>
        <dbReference type="ChEBI" id="CHEBI:57919"/>
    </ligand>
</feature>
<feature type="binding site" evidence="1">
    <location>
        <begin position="355"/>
        <end position="358"/>
    </location>
    <ligand>
        <name>4-CDP-2-C-methyl-D-erythritol 2-phosphate</name>
        <dbReference type="ChEBI" id="CHEBI:57919"/>
    </ligand>
</feature>
<feature type="binding site" evidence="1">
    <location>
        <position position="362"/>
    </location>
    <ligand>
        <name>4-CDP-2-C-methyl-D-erythritol 2-phosphate</name>
        <dbReference type="ChEBI" id="CHEBI:57919"/>
    </ligand>
</feature>
<feature type="binding site" evidence="1">
    <location>
        <position position="365"/>
    </location>
    <ligand>
        <name>4-CDP-2-C-methyl-D-erythritol 2-phosphate</name>
        <dbReference type="ChEBI" id="CHEBI:57919"/>
    </ligand>
</feature>
<feature type="site" description="Transition state stabilizer" evidence="1">
    <location>
        <position position="19"/>
    </location>
</feature>
<feature type="site" description="Transition state stabilizer" evidence="1">
    <location>
        <position position="26"/>
    </location>
</feature>
<feature type="site" description="Positions MEP for the nucleophilic attack" evidence="1">
    <location>
        <position position="151"/>
    </location>
</feature>
<feature type="site" description="Positions MEP for the nucleophilic attack" evidence="1">
    <location>
        <position position="206"/>
    </location>
</feature>
<feature type="site" description="Transition state stabilizer" evidence="1">
    <location>
        <position position="257"/>
    </location>
</feature>
<feature type="site" description="Transition state stabilizer" evidence="1">
    <location>
        <position position="356"/>
    </location>
</feature>
<gene>
    <name evidence="1" type="primary">ispDF</name>
    <name type="ordered locus">Swit_0244</name>
</gene>
<comment type="function">
    <text evidence="1">Bifunctional enzyme that catalyzes the formation of 4-diphosphocytidyl-2-C-methyl-D-erythritol from CTP and 2-C-methyl-D-erythritol 4-phosphate (MEP) (IspD), and catalyzes the conversion of 4-diphosphocytidyl-2-C-methyl-D-erythritol 2-phosphate (CDP-ME2P) to 2-C-methyl-D-erythritol 2,4-cyclodiphosphate (ME-CPP) with a corresponding release of cytidine 5-monophosphate (CMP) (IspF).</text>
</comment>
<comment type="catalytic activity">
    <reaction evidence="1">
        <text>2-C-methyl-D-erythritol 4-phosphate + CTP + H(+) = 4-CDP-2-C-methyl-D-erythritol + diphosphate</text>
        <dbReference type="Rhea" id="RHEA:13429"/>
        <dbReference type="ChEBI" id="CHEBI:15378"/>
        <dbReference type="ChEBI" id="CHEBI:33019"/>
        <dbReference type="ChEBI" id="CHEBI:37563"/>
        <dbReference type="ChEBI" id="CHEBI:57823"/>
        <dbReference type="ChEBI" id="CHEBI:58262"/>
        <dbReference type="EC" id="2.7.7.60"/>
    </reaction>
</comment>
<comment type="catalytic activity">
    <reaction evidence="1">
        <text>4-CDP-2-C-methyl-D-erythritol 2-phosphate = 2-C-methyl-D-erythritol 2,4-cyclic diphosphate + CMP</text>
        <dbReference type="Rhea" id="RHEA:23864"/>
        <dbReference type="ChEBI" id="CHEBI:57919"/>
        <dbReference type="ChEBI" id="CHEBI:58483"/>
        <dbReference type="ChEBI" id="CHEBI:60377"/>
        <dbReference type="EC" id="4.6.1.12"/>
    </reaction>
</comment>
<comment type="cofactor">
    <cofactor evidence="1">
        <name>a divalent metal cation</name>
        <dbReference type="ChEBI" id="CHEBI:60240"/>
    </cofactor>
</comment>
<comment type="pathway">
    <text evidence="1">Isoprenoid biosynthesis; isopentenyl diphosphate biosynthesis via DXP pathway; isopentenyl diphosphate from 1-deoxy-D-xylulose 5-phosphate: step 2/6.</text>
</comment>
<comment type="pathway">
    <text evidence="1">Isoprenoid biosynthesis; isopentenyl diphosphate biosynthesis via DXP pathway; isopentenyl diphosphate from 1-deoxy-D-xylulose 5-phosphate: step 4/6.</text>
</comment>
<comment type="similarity">
    <text evidence="1">In the N-terminal section; belongs to the IspD/TarI cytidylyltransferase family. IspD subfamily.</text>
</comment>
<comment type="similarity">
    <text evidence="1">In the C-terminal section; belongs to the IspF family.</text>
</comment>
<organism>
    <name type="scientific">Rhizorhabdus wittichii (strain DSM 6014 / CCUG 31198 / JCM 15750 / NBRC 105917 / EY 4224 / RW1)</name>
    <name type="common">Sphingomonas wittichii</name>
    <dbReference type="NCBI Taxonomy" id="392499"/>
    <lineage>
        <taxon>Bacteria</taxon>
        <taxon>Pseudomonadati</taxon>
        <taxon>Pseudomonadota</taxon>
        <taxon>Alphaproteobacteria</taxon>
        <taxon>Sphingomonadales</taxon>
        <taxon>Sphingomonadaceae</taxon>
        <taxon>Rhizorhabdus</taxon>
    </lineage>
</organism>
<name>ISPDF_RHIWR</name>
<reference key="1">
    <citation type="journal article" date="2010" name="J. Bacteriol.">
        <title>Genome sequence of the dioxin-mineralizing bacterium Sphingomonas wittichii RW1.</title>
        <authorList>
            <person name="Miller T.R."/>
            <person name="Delcher A.L."/>
            <person name="Salzberg S.L."/>
            <person name="Saunders E."/>
            <person name="Detter J.C."/>
            <person name="Halden R.U."/>
        </authorList>
    </citation>
    <scope>NUCLEOTIDE SEQUENCE [LARGE SCALE GENOMIC DNA]</scope>
    <source>
        <strain>DSM 6014 / CCUG 31198 / JCM 15750 / NBRC 105917 / EY 4224 / RW1</strain>
    </source>
</reference>
<proteinExistence type="inferred from homology"/>
<evidence type="ECO:0000255" key="1">
    <source>
        <dbReference type="HAMAP-Rule" id="MF_01520"/>
    </source>
</evidence>
<dbReference type="EC" id="2.7.7.60" evidence="1"/>
<dbReference type="EC" id="4.6.1.12" evidence="1"/>
<dbReference type="EMBL" id="CP000699">
    <property type="protein sequence ID" value="ABQ66615.1"/>
    <property type="molecule type" value="Genomic_DNA"/>
</dbReference>
<dbReference type="SMR" id="A5V2U9"/>
<dbReference type="STRING" id="392499.Swit_0244"/>
<dbReference type="PaxDb" id="392499-Swit_0244"/>
<dbReference type="KEGG" id="swi:Swit_0244"/>
<dbReference type="eggNOG" id="COG0245">
    <property type="taxonomic scope" value="Bacteria"/>
</dbReference>
<dbReference type="eggNOG" id="COG1211">
    <property type="taxonomic scope" value="Bacteria"/>
</dbReference>
<dbReference type="HOGENOM" id="CLU_042800_2_5_5"/>
<dbReference type="OrthoDB" id="9804336at2"/>
<dbReference type="UniPathway" id="UPA00056">
    <property type="reaction ID" value="UER00093"/>
</dbReference>
<dbReference type="UniPathway" id="UPA00056">
    <property type="reaction ID" value="UER00095"/>
</dbReference>
<dbReference type="Proteomes" id="UP000001989">
    <property type="component" value="Chromosome"/>
</dbReference>
<dbReference type="GO" id="GO:0008685">
    <property type="term" value="F:2-C-methyl-D-erythritol 2,4-cyclodiphosphate synthase activity"/>
    <property type="evidence" value="ECO:0007669"/>
    <property type="project" value="UniProtKB-UniRule"/>
</dbReference>
<dbReference type="GO" id="GO:0050518">
    <property type="term" value="F:2-C-methyl-D-erythritol 4-phosphate cytidylyltransferase activity"/>
    <property type="evidence" value="ECO:0007669"/>
    <property type="project" value="UniProtKB-UniRule"/>
</dbReference>
<dbReference type="GO" id="GO:0046872">
    <property type="term" value="F:metal ion binding"/>
    <property type="evidence" value="ECO:0007669"/>
    <property type="project" value="UniProtKB-KW"/>
</dbReference>
<dbReference type="GO" id="GO:0019288">
    <property type="term" value="P:isopentenyl diphosphate biosynthetic process, methylerythritol 4-phosphate pathway"/>
    <property type="evidence" value="ECO:0007669"/>
    <property type="project" value="UniProtKB-UniRule"/>
</dbReference>
<dbReference type="GO" id="GO:0016114">
    <property type="term" value="P:terpenoid biosynthetic process"/>
    <property type="evidence" value="ECO:0007669"/>
    <property type="project" value="InterPro"/>
</dbReference>
<dbReference type="CDD" id="cd02516">
    <property type="entry name" value="CDP-ME_synthetase"/>
    <property type="match status" value="1"/>
</dbReference>
<dbReference type="CDD" id="cd00554">
    <property type="entry name" value="MECDP_synthase"/>
    <property type="match status" value="1"/>
</dbReference>
<dbReference type="Gene3D" id="3.30.1330.50">
    <property type="entry name" value="2-C-methyl-D-erythritol 2,4-cyclodiphosphate synthase"/>
    <property type="match status" value="1"/>
</dbReference>
<dbReference type="Gene3D" id="3.90.550.10">
    <property type="entry name" value="Spore Coat Polysaccharide Biosynthesis Protein SpsA, Chain A"/>
    <property type="match status" value="1"/>
</dbReference>
<dbReference type="HAMAP" id="MF_00108">
    <property type="entry name" value="IspD"/>
    <property type="match status" value="1"/>
</dbReference>
<dbReference type="HAMAP" id="MF_01520">
    <property type="entry name" value="IspDF"/>
    <property type="match status" value="1"/>
</dbReference>
<dbReference type="HAMAP" id="MF_00107">
    <property type="entry name" value="IspF"/>
    <property type="match status" value="1"/>
</dbReference>
<dbReference type="InterPro" id="IPR001228">
    <property type="entry name" value="IspD"/>
</dbReference>
<dbReference type="InterPro" id="IPR026596">
    <property type="entry name" value="IspD/F"/>
</dbReference>
<dbReference type="InterPro" id="IPR034683">
    <property type="entry name" value="IspD/TarI"/>
</dbReference>
<dbReference type="InterPro" id="IPR018294">
    <property type="entry name" value="ISPD_synthase_CS"/>
</dbReference>
<dbReference type="InterPro" id="IPR003526">
    <property type="entry name" value="MECDP_synthase"/>
</dbReference>
<dbReference type="InterPro" id="IPR020555">
    <property type="entry name" value="MECDP_synthase_CS"/>
</dbReference>
<dbReference type="InterPro" id="IPR036571">
    <property type="entry name" value="MECDP_synthase_sf"/>
</dbReference>
<dbReference type="InterPro" id="IPR029044">
    <property type="entry name" value="Nucleotide-diphossugar_trans"/>
</dbReference>
<dbReference type="NCBIfam" id="TIGR00453">
    <property type="entry name" value="ispD"/>
    <property type="match status" value="1"/>
</dbReference>
<dbReference type="NCBIfam" id="TIGR00151">
    <property type="entry name" value="ispF"/>
    <property type="match status" value="1"/>
</dbReference>
<dbReference type="NCBIfam" id="NF006899">
    <property type="entry name" value="PRK09382.1"/>
    <property type="match status" value="1"/>
</dbReference>
<dbReference type="PANTHER" id="PTHR43181">
    <property type="entry name" value="2-C-METHYL-D-ERYTHRITOL 2,4-CYCLODIPHOSPHATE SYNTHASE, CHLOROPLASTIC"/>
    <property type="match status" value="1"/>
</dbReference>
<dbReference type="PANTHER" id="PTHR43181:SF1">
    <property type="entry name" value="2-C-METHYL-D-ERYTHRITOL 2,4-CYCLODIPHOSPHATE SYNTHASE, CHLOROPLASTIC"/>
    <property type="match status" value="1"/>
</dbReference>
<dbReference type="Pfam" id="PF01128">
    <property type="entry name" value="IspD"/>
    <property type="match status" value="1"/>
</dbReference>
<dbReference type="Pfam" id="PF02542">
    <property type="entry name" value="YgbB"/>
    <property type="match status" value="1"/>
</dbReference>
<dbReference type="SUPFAM" id="SSF69765">
    <property type="entry name" value="IpsF-like"/>
    <property type="match status" value="1"/>
</dbReference>
<dbReference type="SUPFAM" id="SSF53448">
    <property type="entry name" value="Nucleotide-diphospho-sugar transferases"/>
    <property type="match status" value="1"/>
</dbReference>
<dbReference type="PROSITE" id="PS01295">
    <property type="entry name" value="ISPD"/>
    <property type="match status" value="1"/>
</dbReference>
<dbReference type="PROSITE" id="PS01350">
    <property type="entry name" value="ISPF"/>
    <property type="match status" value="1"/>
</dbReference>